<accession>A9MN71</accession>
<reference key="1">
    <citation type="submission" date="2007-11" db="EMBL/GenBank/DDBJ databases">
        <authorList>
            <consortium name="The Salmonella enterica serovar Arizonae Genome Sequencing Project"/>
            <person name="McClelland M."/>
            <person name="Sanderson E.K."/>
            <person name="Porwollik S."/>
            <person name="Spieth J."/>
            <person name="Clifton W.S."/>
            <person name="Fulton R."/>
            <person name="Chunyan W."/>
            <person name="Wollam A."/>
            <person name="Shah N."/>
            <person name="Pepin K."/>
            <person name="Bhonagiri V."/>
            <person name="Nash W."/>
            <person name="Johnson M."/>
            <person name="Thiruvilangam P."/>
            <person name="Wilson R."/>
        </authorList>
    </citation>
    <scope>NUCLEOTIDE SEQUENCE [LARGE SCALE GENOMIC DNA]</scope>
    <source>
        <strain>ATCC BAA-731 / CDC346-86 / RSK2980</strain>
    </source>
</reference>
<comment type="function">
    <text evidence="1">One of the primary rRNA binding proteins, it binds directly to 16S rRNA where it nucleates assembly of the body of the 30S subunit.</text>
</comment>
<comment type="function">
    <text evidence="1">With S5 and S12 plays an important role in translational accuracy.</text>
</comment>
<comment type="subunit">
    <text evidence="1">Part of the 30S ribosomal subunit. Contacts protein S5. The interaction surface between S4 and S5 is involved in control of translational fidelity.</text>
</comment>
<comment type="similarity">
    <text evidence="1">Belongs to the universal ribosomal protein uS4 family.</text>
</comment>
<protein>
    <recommendedName>
        <fullName evidence="1">Small ribosomal subunit protein uS4</fullName>
    </recommendedName>
    <alternativeName>
        <fullName evidence="2">30S ribosomal protein S4</fullName>
    </alternativeName>
</protein>
<organism>
    <name type="scientific">Salmonella arizonae (strain ATCC BAA-731 / CDC346-86 / RSK2980)</name>
    <dbReference type="NCBI Taxonomy" id="41514"/>
    <lineage>
        <taxon>Bacteria</taxon>
        <taxon>Pseudomonadati</taxon>
        <taxon>Pseudomonadota</taxon>
        <taxon>Gammaproteobacteria</taxon>
        <taxon>Enterobacterales</taxon>
        <taxon>Enterobacteriaceae</taxon>
        <taxon>Salmonella</taxon>
    </lineage>
</organism>
<keyword id="KW-1185">Reference proteome</keyword>
<keyword id="KW-0687">Ribonucleoprotein</keyword>
<keyword id="KW-0689">Ribosomal protein</keyword>
<keyword id="KW-0694">RNA-binding</keyword>
<keyword id="KW-0699">rRNA-binding</keyword>
<sequence length="206" mass="23485">MARYLGPKLKLSRREGTDLFLKSGVRAIDTKCKIEQAPGQHGARKPRLSDYGVQLREKQKVRRIYGVLERQFRNYYKEAARLKGNTGENLLALLEGRLDNVVYRMGFGATRAEARQLVSHKAIMVNGRVVNIASYQVSPNDVVSIREKAKKQSRVKAALELAEQREKPTWLEVDAGKMEGTYKRKPERSDLSADINEHLIVELYSK</sequence>
<proteinExistence type="inferred from homology"/>
<feature type="chain" id="PRO_1000085989" description="Small ribosomal subunit protein uS4">
    <location>
        <begin position="1"/>
        <end position="206"/>
    </location>
</feature>
<feature type="domain" description="S4 RNA-binding" evidence="1">
    <location>
        <begin position="96"/>
        <end position="156"/>
    </location>
</feature>
<gene>
    <name evidence="1" type="primary">rpsD</name>
    <name type="ordered locus">SARI_04212</name>
</gene>
<dbReference type="EMBL" id="CP000880">
    <property type="protein sequence ID" value="ABX24001.1"/>
    <property type="molecule type" value="Genomic_DNA"/>
</dbReference>
<dbReference type="SMR" id="A9MN71"/>
<dbReference type="STRING" id="41514.SARI_04212"/>
<dbReference type="KEGG" id="ses:SARI_04212"/>
<dbReference type="HOGENOM" id="CLU_092403_0_2_6"/>
<dbReference type="Proteomes" id="UP000002084">
    <property type="component" value="Chromosome"/>
</dbReference>
<dbReference type="GO" id="GO:0015935">
    <property type="term" value="C:small ribosomal subunit"/>
    <property type="evidence" value="ECO:0007669"/>
    <property type="project" value="InterPro"/>
</dbReference>
<dbReference type="GO" id="GO:0019843">
    <property type="term" value="F:rRNA binding"/>
    <property type="evidence" value="ECO:0007669"/>
    <property type="project" value="UniProtKB-UniRule"/>
</dbReference>
<dbReference type="GO" id="GO:0003735">
    <property type="term" value="F:structural constituent of ribosome"/>
    <property type="evidence" value="ECO:0007669"/>
    <property type="project" value="InterPro"/>
</dbReference>
<dbReference type="GO" id="GO:0042274">
    <property type="term" value="P:ribosomal small subunit biogenesis"/>
    <property type="evidence" value="ECO:0007669"/>
    <property type="project" value="TreeGrafter"/>
</dbReference>
<dbReference type="GO" id="GO:0006412">
    <property type="term" value="P:translation"/>
    <property type="evidence" value="ECO:0007669"/>
    <property type="project" value="UniProtKB-UniRule"/>
</dbReference>
<dbReference type="CDD" id="cd00165">
    <property type="entry name" value="S4"/>
    <property type="match status" value="1"/>
</dbReference>
<dbReference type="FunFam" id="1.10.1050.10:FF:000001">
    <property type="entry name" value="30S ribosomal protein S4"/>
    <property type="match status" value="1"/>
</dbReference>
<dbReference type="FunFam" id="3.10.290.10:FF:000001">
    <property type="entry name" value="30S ribosomal protein S4"/>
    <property type="match status" value="1"/>
</dbReference>
<dbReference type="Gene3D" id="1.10.1050.10">
    <property type="entry name" value="Ribosomal Protein S4 Delta 41, Chain A, domain 1"/>
    <property type="match status" value="1"/>
</dbReference>
<dbReference type="Gene3D" id="3.10.290.10">
    <property type="entry name" value="RNA-binding S4 domain"/>
    <property type="match status" value="1"/>
</dbReference>
<dbReference type="HAMAP" id="MF_01306_B">
    <property type="entry name" value="Ribosomal_uS4_B"/>
    <property type="match status" value="1"/>
</dbReference>
<dbReference type="InterPro" id="IPR022801">
    <property type="entry name" value="Ribosomal_uS4"/>
</dbReference>
<dbReference type="InterPro" id="IPR005709">
    <property type="entry name" value="Ribosomal_uS4_bac-type"/>
</dbReference>
<dbReference type="InterPro" id="IPR018079">
    <property type="entry name" value="Ribosomal_uS4_CS"/>
</dbReference>
<dbReference type="InterPro" id="IPR001912">
    <property type="entry name" value="Ribosomal_uS4_N"/>
</dbReference>
<dbReference type="InterPro" id="IPR002942">
    <property type="entry name" value="S4_RNA-bd"/>
</dbReference>
<dbReference type="InterPro" id="IPR036986">
    <property type="entry name" value="S4_RNA-bd_sf"/>
</dbReference>
<dbReference type="NCBIfam" id="NF003717">
    <property type="entry name" value="PRK05327.1"/>
    <property type="match status" value="1"/>
</dbReference>
<dbReference type="NCBIfam" id="TIGR01017">
    <property type="entry name" value="rpsD_bact"/>
    <property type="match status" value="1"/>
</dbReference>
<dbReference type="PANTHER" id="PTHR11831">
    <property type="entry name" value="30S 40S RIBOSOMAL PROTEIN"/>
    <property type="match status" value="1"/>
</dbReference>
<dbReference type="PANTHER" id="PTHR11831:SF4">
    <property type="entry name" value="SMALL RIBOSOMAL SUBUNIT PROTEIN US4M"/>
    <property type="match status" value="1"/>
</dbReference>
<dbReference type="Pfam" id="PF00163">
    <property type="entry name" value="Ribosomal_S4"/>
    <property type="match status" value="1"/>
</dbReference>
<dbReference type="Pfam" id="PF01479">
    <property type="entry name" value="S4"/>
    <property type="match status" value="1"/>
</dbReference>
<dbReference type="SMART" id="SM01390">
    <property type="entry name" value="Ribosomal_S4"/>
    <property type="match status" value="1"/>
</dbReference>
<dbReference type="SMART" id="SM00363">
    <property type="entry name" value="S4"/>
    <property type="match status" value="1"/>
</dbReference>
<dbReference type="SUPFAM" id="SSF55174">
    <property type="entry name" value="Alpha-L RNA-binding motif"/>
    <property type="match status" value="1"/>
</dbReference>
<dbReference type="PROSITE" id="PS00632">
    <property type="entry name" value="RIBOSOMAL_S4"/>
    <property type="match status" value="1"/>
</dbReference>
<dbReference type="PROSITE" id="PS50889">
    <property type="entry name" value="S4"/>
    <property type="match status" value="1"/>
</dbReference>
<evidence type="ECO:0000255" key="1">
    <source>
        <dbReference type="HAMAP-Rule" id="MF_01306"/>
    </source>
</evidence>
<evidence type="ECO:0000305" key="2"/>
<name>RS4_SALAR</name>